<keyword id="KW-0472">Membrane</keyword>
<keyword id="KW-0496">Mitochondrion</keyword>
<keyword id="KW-1000">Mitochondrion outer membrane</keyword>
<keyword id="KW-1267">Proteomics identification</keyword>
<keyword id="KW-1185">Reference proteome</keyword>
<keyword id="KW-0677">Repeat</keyword>
<keyword id="KW-0735">Signal-anchor</keyword>
<keyword id="KW-0812">Transmembrane</keyword>
<keyword id="KW-1133">Transmembrane helix</keyword>
<protein>
    <recommendedName>
        <fullName>Armadillo repeat-containing X-linked protein 1</fullName>
    </recommendedName>
    <alternativeName>
        <fullName>ARM protein lost in epithelial cancers on chromosome X 1</fullName>
        <shortName>Protein ALEX1</shortName>
    </alternativeName>
</protein>
<name>ARMX1_HUMAN</name>
<accession>Q9P291</accession>
<accession>Q53HK2</accession>
<accession>Q9H2Q0</accession>
<dbReference type="EMBL" id="AB039670">
    <property type="protein sequence ID" value="BAA94603.1"/>
    <property type="molecule type" value="mRNA"/>
</dbReference>
<dbReference type="EMBL" id="AF248963">
    <property type="protein sequence ID" value="AAG44561.1"/>
    <property type="status" value="ALT_FRAME"/>
    <property type="molecule type" value="mRNA"/>
</dbReference>
<dbReference type="EMBL" id="AK074785">
    <property type="protein sequence ID" value="BAC11208.1"/>
    <property type="molecule type" value="mRNA"/>
</dbReference>
<dbReference type="EMBL" id="AK222578">
    <property type="protein sequence ID" value="BAD96298.1"/>
    <property type="molecule type" value="mRNA"/>
</dbReference>
<dbReference type="EMBL" id="Z73913">
    <property type="protein sequence ID" value="CAI41999.1"/>
    <property type="molecule type" value="Genomic_DNA"/>
</dbReference>
<dbReference type="EMBL" id="BC002691">
    <property type="protein sequence ID" value="AAH02691.1"/>
    <property type="molecule type" value="mRNA"/>
</dbReference>
<dbReference type="CCDS" id="CCDS14487.1"/>
<dbReference type="PIR" id="JC7582">
    <property type="entry name" value="JC7582"/>
</dbReference>
<dbReference type="RefSeq" id="NP_057692.1">
    <property type="nucleotide sequence ID" value="NM_016608.2"/>
</dbReference>
<dbReference type="SMR" id="Q9P291"/>
<dbReference type="BioGRID" id="119460">
    <property type="interactions" value="15"/>
</dbReference>
<dbReference type="FunCoup" id="Q9P291">
    <property type="interactions" value="313"/>
</dbReference>
<dbReference type="IntAct" id="Q9P291">
    <property type="interactions" value="8"/>
</dbReference>
<dbReference type="STRING" id="9606.ENSP00000361917"/>
<dbReference type="iPTMnet" id="Q9P291"/>
<dbReference type="PhosphoSitePlus" id="Q9P291"/>
<dbReference type="BioMuta" id="ARMCX1"/>
<dbReference type="DMDM" id="74761871"/>
<dbReference type="jPOST" id="Q9P291"/>
<dbReference type="MassIVE" id="Q9P291"/>
<dbReference type="PaxDb" id="9606-ENSP00000361917"/>
<dbReference type="PeptideAtlas" id="Q9P291"/>
<dbReference type="ProteomicsDB" id="83759"/>
<dbReference type="Pumba" id="Q9P291"/>
<dbReference type="Antibodypedia" id="28759">
    <property type="antibodies" value="242 antibodies from 29 providers"/>
</dbReference>
<dbReference type="DNASU" id="51309"/>
<dbReference type="Ensembl" id="ENST00000372829.8">
    <property type="protein sequence ID" value="ENSP00000361917.3"/>
    <property type="gene ID" value="ENSG00000126947.13"/>
</dbReference>
<dbReference type="GeneID" id="51309"/>
<dbReference type="KEGG" id="hsa:51309"/>
<dbReference type="MANE-Select" id="ENST00000372829.8">
    <property type="protein sequence ID" value="ENSP00000361917.3"/>
    <property type="RefSeq nucleotide sequence ID" value="NM_016608.2"/>
    <property type="RefSeq protein sequence ID" value="NP_057692.1"/>
</dbReference>
<dbReference type="UCSC" id="uc004ehv.4">
    <property type="organism name" value="human"/>
</dbReference>
<dbReference type="AGR" id="HGNC:18073"/>
<dbReference type="CTD" id="51309"/>
<dbReference type="DisGeNET" id="51309"/>
<dbReference type="GeneCards" id="ARMCX1"/>
<dbReference type="HGNC" id="HGNC:18073">
    <property type="gene designation" value="ARMCX1"/>
</dbReference>
<dbReference type="HPA" id="ENSG00000126947">
    <property type="expression patterns" value="Low tissue specificity"/>
</dbReference>
<dbReference type="MIM" id="300362">
    <property type="type" value="gene"/>
</dbReference>
<dbReference type="neXtProt" id="NX_Q9P291"/>
<dbReference type="OpenTargets" id="ENSG00000126947"/>
<dbReference type="PharmGKB" id="PA128394658"/>
<dbReference type="VEuPathDB" id="HostDB:ENSG00000126947"/>
<dbReference type="eggNOG" id="ENOG502QYZW">
    <property type="taxonomic scope" value="Eukaryota"/>
</dbReference>
<dbReference type="GeneTree" id="ENSGT00940000162561"/>
<dbReference type="HOGENOM" id="CLU_037187_0_0_1"/>
<dbReference type="InParanoid" id="Q9P291"/>
<dbReference type="OMA" id="CDDTVIC"/>
<dbReference type="OrthoDB" id="10017790at2759"/>
<dbReference type="PAN-GO" id="Q9P291">
    <property type="GO annotations" value="1 GO annotation based on evolutionary models"/>
</dbReference>
<dbReference type="PhylomeDB" id="Q9P291"/>
<dbReference type="TreeFam" id="TF335652"/>
<dbReference type="PathwayCommons" id="Q9P291"/>
<dbReference type="SignaLink" id="Q9P291"/>
<dbReference type="BioGRID-ORCS" id="51309">
    <property type="hits" value="16 hits in 766 CRISPR screens"/>
</dbReference>
<dbReference type="GeneWiki" id="ARMCX1"/>
<dbReference type="GenomeRNAi" id="51309"/>
<dbReference type="Pharos" id="Q9P291">
    <property type="development level" value="Tbio"/>
</dbReference>
<dbReference type="PRO" id="PR:Q9P291"/>
<dbReference type="Proteomes" id="UP000005640">
    <property type="component" value="Chromosome X"/>
</dbReference>
<dbReference type="RNAct" id="Q9P291">
    <property type="molecule type" value="protein"/>
</dbReference>
<dbReference type="Bgee" id="ENSG00000126947">
    <property type="expression patterns" value="Expressed in germinal epithelium of ovary and 204 other cell types or tissues"/>
</dbReference>
<dbReference type="ExpressionAtlas" id="Q9P291">
    <property type="expression patterns" value="baseline and differential"/>
</dbReference>
<dbReference type="GO" id="GO:0005741">
    <property type="term" value="C:mitochondrial outer membrane"/>
    <property type="evidence" value="ECO:0007669"/>
    <property type="project" value="UniProtKB-SubCell"/>
</dbReference>
<dbReference type="GO" id="GO:0005739">
    <property type="term" value="C:mitochondrion"/>
    <property type="evidence" value="ECO:0000318"/>
    <property type="project" value="GO_Central"/>
</dbReference>
<dbReference type="GO" id="GO:0061484">
    <property type="term" value="P:hematopoietic stem cell homeostasis"/>
    <property type="evidence" value="ECO:0007669"/>
    <property type="project" value="Ensembl"/>
</dbReference>
<dbReference type="Gene3D" id="1.25.10.10">
    <property type="entry name" value="Leucine-rich Repeat Variant"/>
    <property type="match status" value="1"/>
</dbReference>
<dbReference type="InterPro" id="IPR011989">
    <property type="entry name" value="ARM-like"/>
</dbReference>
<dbReference type="InterPro" id="IPR006911">
    <property type="entry name" value="ARM-rpt_dom"/>
</dbReference>
<dbReference type="InterPro" id="IPR016024">
    <property type="entry name" value="ARM-type_fold"/>
</dbReference>
<dbReference type="InterPro" id="IPR000225">
    <property type="entry name" value="Armadillo"/>
</dbReference>
<dbReference type="InterPro" id="IPR051303">
    <property type="entry name" value="Armcx_regulator"/>
</dbReference>
<dbReference type="PANTHER" id="PTHR15712">
    <property type="entry name" value="ARMADILLO REPEAT CONTAINING PROTEIN"/>
    <property type="match status" value="1"/>
</dbReference>
<dbReference type="PANTHER" id="PTHR15712:SF14">
    <property type="entry name" value="ARMADILLO REPEAT-CONTAINING X-LINKED PROTEIN 1"/>
    <property type="match status" value="1"/>
</dbReference>
<dbReference type="Pfam" id="PF04826">
    <property type="entry name" value="Arm_2"/>
    <property type="match status" value="1"/>
</dbReference>
<dbReference type="SMART" id="SM00185">
    <property type="entry name" value="ARM"/>
    <property type="match status" value="2"/>
</dbReference>
<dbReference type="SUPFAM" id="SSF48371">
    <property type="entry name" value="ARM repeat"/>
    <property type="match status" value="1"/>
</dbReference>
<dbReference type="PROSITE" id="PS50176">
    <property type="entry name" value="ARM_REPEAT"/>
    <property type="match status" value="1"/>
</dbReference>
<evidence type="ECO:0000250" key="1">
    <source>
        <dbReference type="UniProtKB" id="Q8BHS6"/>
    </source>
</evidence>
<evidence type="ECO:0000250" key="2">
    <source>
        <dbReference type="UniProtKB" id="Q9CX83"/>
    </source>
</evidence>
<evidence type="ECO:0000255" key="3"/>
<evidence type="ECO:0000256" key="4">
    <source>
        <dbReference type="SAM" id="MobiDB-lite"/>
    </source>
</evidence>
<evidence type="ECO:0000269" key="5">
    <source>
    </source>
</evidence>
<evidence type="ECO:0000305" key="6"/>
<comment type="function">
    <text evidence="2">Regulates mitochondrial transport during axon regeneration. Increases the proportion of motile mitochondria by recruiting stationary mitochondria into the motile pool. Enhances mitochondria movement and neurite growth in both adult axons and embryonic neurons. Promotes neuronal survival and axon regeneration after nerve injury. May link mitochondria to the Trak1-kinesin motor complex via its interaction with MIRO1.</text>
</comment>
<comment type="subunit">
    <text evidence="2">Interacts with MIRO1.</text>
</comment>
<comment type="interaction">
    <interactant intactId="EBI-2843626">
        <id>Q9P291</id>
    </interactant>
    <interactant intactId="EBI-739624">
        <id>Q8NHQ1</id>
        <label>CEP70</label>
    </interactant>
    <organismsDiffer>false</organismsDiffer>
    <experiments>3</experiments>
</comment>
<comment type="interaction">
    <interactant intactId="EBI-2843626">
        <id>Q9P291</id>
    </interactant>
    <interactant intactId="EBI-945751">
        <id>P38432</id>
        <label>COIL</label>
    </interactant>
    <organismsDiffer>false</organismsDiffer>
    <experiments>3</experiments>
</comment>
<comment type="interaction">
    <interactant intactId="EBI-2843626">
        <id>Q9P291</id>
    </interactant>
    <interactant intactId="EBI-746309">
        <id>Q92917</id>
        <label>GPKOW</label>
    </interactant>
    <organismsDiffer>false</organismsDiffer>
    <experiments>3</experiments>
</comment>
<comment type="interaction">
    <interactant intactId="EBI-2843626">
        <id>Q9P291</id>
    </interactant>
    <interactant intactId="EBI-79165">
        <id>Q9NRD5</id>
        <label>PICK1</label>
    </interactant>
    <organismsDiffer>false</organismsDiffer>
    <experiments>3</experiments>
</comment>
<comment type="interaction">
    <interactant intactId="EBI-2843626">
        <id>Q9P291</id>
    </interactant>
    <interactant intactId="EBI-1105213">
        <id>Q9UBB9</id>
        <label>TFIP11</label>
    </interactant>
    <organismsDiffer>false</organismsDiffer>
    <experiments>4</experiments>
</comment>
<comment type="interaction">
    <interactant intactId="EBI-2843626">
        <id>Q9P291</id>
    </interactant>
    <interactant intactId="EBI-742740">
        <id>Q96BR9</id>
        <label>ZBTB8A</label>
    </interactant>
    <organismsDiffer>false</organismsDiffer>
    <experiments>6</experiments>
</comment>
<comment type="subcellular location">
    <subcellularLocation>
        <location evidence="2">Mitochondrion</location>
    </subcellularLocation>
    <subcellularLocation>
        <location evidence="2">Mitochondrion outer membrane</location>
        <topology evidence="3">Single-pass membrane protein</topology>
    </subcellularLocation>
</comment>
<comment type="tissue specificity">
    <text evidence="5">Expressed at high levels ovary, heart, testis, prostate, brain, spleen and colon. Expressed at very low levels in liver and thymus. Not expressed in peripheral blood leukocytes. Not or reduced expressed in lung, prostate, colon, pancreas and ovarian carcinomas.</text>
</comment>
<comment type="similarity">
    <text evidence="6">Belongs to the eutherian X-chromosome-specific Armcx family.</text>
</comment>
<comment type="sequence caution" evidence="6">
    <conflict type="frameshift">
        <sequence resource="EMBL-CDS" id="AAG44561"/>
    </conflict>
</comment>
<comment type="online information" name="Atlas of Genetics and Cytogenetics in Oncology and Haematology">
    <link uri="https://atlasgeneticsoncology.org/gene/477/ALEX1Xq22"/>
</comment>
<sequence>MGRTREAGCVAAGVVIGAGACYCVYRLAWGRDENEKIWDEDEESTDTSEIGVETVKGAKTNAGAGSGAKLQGDSEVKPEVSLGLEDCPGVKEKAHSGSHSGGGLEAKAKALFNTLKEQASAKAGKGARVGTISGNRTLAPSLPCPGGRGGGCHPTRSGSRAGGRASGKSKGKARSKSTRAPATTWPVRRGKFNFPYKIDDILSAPDLQKVLNILERTNDPFIQEVALVTLGNNAAYSFNQNAIRELGGVPIIAKLIKTKDPIIREKTYNALNNLSVNAENQGKIKTYISQVCDDTMVCRLDSAVQMAGLRLLTNMTVTNHYQHLLSYSFPDFFALLFLGNHFTKIQIMKLIINFTENPAMTRELVSCKVPSELISLFNKEWDREILLNILTLFENINDNIKNEGLASSRKEFSRSSLFFLFKESGVCVKKIKALANHNDLVVKVKVLKVLTKL</sequence>
<feature type="chain" id="PRO_0000191360" description="Armadillo repeat-containing X-linked protein 1">
    <location>
        <begin position="1"/>
        <end position="453"/>
    </location>
</feature>
<feature type="topological domain" description="Mitochondrial intermembrane" evidence="1">
    <location>
        <begin position="1"/>
        <end position="6"/>
    </location>
</feature>
<feature type="transmembrane region" description="Helical; Signal-anchor" evidence="3">
    <location>
        <begin position="7"/>
        <end position="29"/>
    </location>
</feature>
<feature type="topological domain" description="Cytoplasmic" evidence="1">
    <location>
        <begin position="30"/>
        <end position="453"/>
    </location>
</feature>
<feature type="repeat" description="ARM 1" evidence="3">
    <location>
        <begin position="195"/>
        <end position="235"/>
    </location>
</feature>
<feature type="repeat" description="ARM 2" evidence="3">
    <location>
        <begin position="237"/>
        <end position="276"/>
    </location>
</feature>
<feature type="repeat" description="ARM 3" evidence="3">
    <location>
        <begin position="358"/>
        <end position="398"/>
    </location>
</feature>
<feature type="repeat" description="ARM 4" evidence="3">
    <location>
        <begin position="415"/>
        <end position="453"/>
    </location>
</feature>
<feature type="region of interest" description="Mitochondrion outer membrane (MOM)-targeting sequence" evidence="6">
    <location>
        <begin position="1"/>
        <end position="6"/>
    </location>
</feature>
<feature type="region of interest" description="Mitochondrion outer membrane (MOM)-targeting sequence" evidence="6">
    <location>
        <begin position="26"/>
        <end position="36"/>
    </location>
</feature>
<feature type="region of interest" description="Disordered" evidence="4">
    <location>
        <begin position="58"/>
        <end position="77"/>
    </location>
</feature>
<feature type="region of interest" description="Disordered" evidence="4">
    <location>
        <begin position="132"/>
        <end position="182"/>
    </location>
</feature>
<feature type="compositionally biased region" description="Basic residues" evidence="4">
    <location>
        <begin position="167"/>
        <end position="177"/>
    </location>
</feature>
<feature type="sequence conflict" description="In Ref. 4; BAD96298." evidence="6" ref="4">
    <original>C</original>
    <variation>R</variation>
    <location>
        <position position="21"/>
    </location>
</feature>
<feature type="sequence conflict" description="In Ref. 4; BAD96298." evidence="6" ref="4">
    <original>N</original>
    <variation>Y</variation>
    <location>
        <position position="357"/>
    </location>
</feature>
<reference key="1">
    <citation type="journal article" date="2001" name="Biochem. Biophys. Res. Commun.">
        <title>ALEX1, a novel human armadillo repeat protein that is expressed differentially in normal tissues and carcinomas.</title>
        <authorList>
            <person name="Kurochkin I.V."/>
            <person name="Yonemitsu N."/>
            <person name="Funahashi S."/>
            <person name="Nomura H."/>
        </authorList>
    </citation>
    <scope>NUCLEOTIDE SEQUENCE [MRNA]</scope>
    <scope>TISSUE SPECIFICITY</scope>
</reference>
<reference key="2">
    <citation type="submission" date="2000-03" db="EMBL/GenBank/DDBJ databases">
        <authorList>
            <person name="Yang Y."/>
            <person name="Xu X."/>
            <person name="Gao G."/>
            <person name="Xiao H."/>
            <person name="Chen Z."/>
            <person name="Han Z."/>
        </authorList>
    </citation>
    <scope>NUCLEOTIDE SEQUENCE [LARGE SCALE MRNA]</scope>
    <source>
        <tissue>Adrenal gland</tissue>
    </source>
</reference>
<reference key="3">
    <citation type="journal article" date="2004" name="Nat. Genet.">
        <title>Complete sequencing and characterization of 21,243 full-length human cDNAs.</title>
        <authorList>
            <person name="Ota T."/>
            <person name="Suzuki Y."/>
            <person name="Nishikawa T."/>
            <person name="Otsuki T."/>
            <person name="Sugiyama T."/>
            <person name="Irie R."/>
            <person name="Wakamatsu A."/>
            <person name="Hayashi K."/>
            <person name="Sato H."/>
            <person name="Nagai K."/>
            <person name="Kimura K."/>
            <person name="Makita H."/>
            <person name="Sekine M."/>
            <person name="Obayashi M."/>
            <person name="Nishi T."/>
            <person name="Shibahara T."/>
            <person name="Tanaka T."/>
            <person name="Ishii S."/>
            <person name="Yamamoto J."/>
            <person name="Saito K."/>
            <person name="Kawai Y."/>
            <person name="Isono Y."/>
            <person name="Nakamura Y."/>
            <person name="Nagahari K."/>
            <person name="Murakami K."/>
            <person name="Yasuda T."/>
            <person name="Iwayanagi T."/>
            <person name="Wagatsuma M."/>
            <person name="Shiratori A."/>
            <person name="Sudo H."/>
            <person name="Hosoiri T."/>
            <person name="Kaku Y."/>
            <person name="Kodaira H."/>
            <person name="Kondo H."/>
            <person name="Sugawara M."/>
            <person name="Takahashi M."/>
            <person name="Kanda K."/>
            <person name="Yokoi T."/>
            <person name="Furuya T."/>
            <person name="Kikkawa E."/>
            <person name="Omura Y."/>
            <person name="Abe K."/>
            <person name="Kamihara K."/>
            <person name="Katsuta N."/>
            <person name="Sato K."/>
            <person name="Tanikawa M."/>
            <person name="Yamazaki M."/>
            <person name="Ninomiya K."/>
            <person name="Ishibashi T."/>
            <person name="Yamashita H."/>
            <person name="Murakawa K."/>
            <person name="Fujimori K."/>
            <person name="Tanai H."/>
            <person name="Kimata M."/>
            <person name="Watanabe M."/>
            <person name="Hiraoka S."/>
            <person name="Chiba Y."/>
            <person name="Ishida S."/>
            <person name="Ono Y."/>
            <person name="Takiguchi S."/>
            <person name="Watanabe S."/>
            <person name="Yosida M."/>
            <person name="Hotuta T."/>
            <person name="Kusano J."/>
            <person name="Kanehori K."/>
            <person name="Takahashi-Fujii A."/>
            <person name="Hara H."/>
            <person name="Tanase T.-O."/>
            <person name="Nomura Y."/>
            <person name="Togiya S."/>
            <person name="Komai F."/>
            <person name="Hara R."/>
            <person name="Takeuchi K."/>
            <person name="Arita M."/>
            <person name="Imose N."/>
            <person name="Musashino K."/>
            <person name="Yuuki H."/>
            <person name="Oshima A."/>
            <person name="Sasaki N."/>
            <person name="Aotsuka S."/>
            <person name="Yoshikawa Y."/>
            <person name="Matsunawa H."/>
            <person name="Ichihara T."/>
            <person name="Shiohata N."/>
            <person name="Sano S."/>
            <person name="Moriya S."/>
            <person name="Momiyama H."/>
            <person name="Satoh N."/>
            <person name="Takami S."/>
            <person name="Terashima Y."/>
            <person name="Suzuki O."/>
            <person name="Nakagawa S."/>
            <person name="Senoh A."/>
            <person name="Mizoguchi H."/>
            <person name="Goto Y."/>
            <person name="Shimizu F."/>
            <person name="Wakebe H."/>
            <person name="Hishigaki H."/>
            <person name="Watanabe T."/>
            <person name="Sugiyama A."/>
            <person name="Takemoto M."/>
            <person name="Kawakami B."/>
            <person name="Yamazaki M."/>
            <person name="Watanabe K."/>
            <person name="Kumagai A."/>
            <person name="Itakura S."/>
            <person name="Fukuzumi Y."/>
            <person name="Fujimori Y."/>
            <person name="Komiyama M."/>
            <person name="Tashiro H."/>
            <person name="Tanigami A."/>
            <person name="Fujiwara T."/>
            <person name="Ono T."/>
            <person name="Yamada K."/>
            <person name="Fujii Y."/>
            <person name="Ozaki K."/>
            <person name="Hirao M."/>
            <person name="Ohmori Y."/>
            <person name="Kawabata A."/>
            <person name="Hikiji T."/>
            <person name="Kobatake N."/>
            <person name="Inagaki H."/>
            <person name="Ikema Y."/>
            <person name="Okamoto S."/>
            <person name="Okitani R."/>
            <person name="Kawakami T."/>
            <person name="Noguchi S."/>
            <person name="Itoh T."/>
            <person name="Shigeta K."/>
            <person name="Senba T."/>
            <person name="Matsumura K."/>
            <person name="Nakajima Y."/>
            <person name="Mizuno T."/>
            <person name="Morinaga M."/>
            <person name="Sasaki M."/>
            <person name="Togashi T."/>
            <person name="Oyama M."/>
            <person name="Hata H."/>
            <person name="Watanabe M."/>
            <person name="Komatsu T."/>
            <person name="Mizushima-Sugano J."/>
            <person name="Satoh T."/>
            <person name="Shirai Y."/>
            <person name="Takahashi Y."/>
            <person name="Nakagawa K."/>
            <person name="Okumura K."/>
            <person name="Nagase T."/>
            <person name="Nomura N."/>
            <person name="Kikuchi H."/>
            <person name="Masuho Y."/>
            <person name="Yamashita R."/>
            <person name="Nakai K."/>
            <person name="Yada T."/>
            <person name="Nakamura Y."/>
            <person name="Ohara O."/>
            <person name="Isogai T."/>
            <person name="Sugano S."/>
        </authorList>
    </citation>
    <scope>NUCLEOTIDE SEQUENCE [LARGE SCALE MRNA]</scope>
</reference>
<reference key="4">
    <citation type="submission" date="2005-04" db="EMBL/GenBank/DDBJ databases">
        <authorList>
            <person name="Suzuki Y."/>
            <person name="Sugano S."/>
            <person name="Totoki Y."/>
            <person name="Toyoda A."/>
            <person name="Takeda T."/>
            <person name="Sakaki Y."/>
            <person name="Tanaka A."/>
            <person name="Yokoyama S."/>
        </authorList>
    </citation>
    <scope>NUCLEOTIDE SEQUENCE [LARGE SCALE MRNA]</scope>
    <source>
        <tissue>Coronary artery</tissue>
    </source>
</reference>
<reference key="5">
    <citation type="journal article" date="2005" name="Nature">
        <title>The DNA sequence of the human X chromosome.</title>
        <authorList>
            <person name="Ross M.T."/>
            <person name="Grafham D.V."/>
            <person name="Coffey A.J."/>
            <person name="Scherer S."/>
            <person name="McLay K."/>
            <person name="Muzny D."/>
            <person name="Platzer M."/>
            <person name="Howell G.R."/>
            <person name="Burrows C."/>
            <person name="Bird C.P."/>
            <person name="Frankish A."/>
            <person name="Lovell F.L."/>
            <person name="Howe K.L."/>
            <person name="Ashurst J.L."/>
            <person name="Fulton R.S."/>
            <person name="Sudbrak R."/>
            <person name="Wen G."/>
            <person name="Jones M.C."/>
            <person name="Hurles M.E."/>
            <person name="Andrews T.D."/>
            <person name="Scott C.E."/>
            <person name="Searle S."/>
            <person name="Ramser J."/>
            <person name="Whittaker A."/>
            <person name="Deadman R."/>
            <person name="Carter N.P."/>
            <person name="Hunt S.E."/>
            <person name="Chen R."/>
            <person name="Cree A."/>
            <person name="Gunaratne P."/>
            <person name="Havlak P."/>
            <person name="Hodgson A."/>
            <person name="Metzker M.L."/>
            <person name="Richards S."/>
            <person name="Scott G."/>
            <person name="Steffen D."/>
            <person name="Sodergren E."/>
            <person name="Wheeler D.A."/>
            <person name="Worley K.C."/>
            <person name="Ainscough R."/>
            <person name="Ambrose K.D."/>
            <person name="Ansari-Lari M.A."/>
            <person name="Aradhya S."/>
            <person name="Ashwell R.I."/>
            <person name="Babbage A.K."/>
            <person name="Bagguley C.L."/>
            <person name="Ballabio A."/>
            <person name="Banerjee R."/>
            <person name="Barker G.E."/>
            <person name="Barlow K.F."/>
            <person name="Barrett I.P."/>
            <person name="Bates K.N."/>
            <person name="Beare D.M."/>
            <person name="Beasley H."/>
            <person name="Beasley O."/>
            <person name="Beck A."/>
            <person name="Bethel G."/>
            <person name="Blechschmidt K."/>
            <person name="Brady N."/>
            <person name="Bray-Allen S."/>
            <person name="Bridgeman A.M."/>
            <person name="Brown A.J."/>
            <person name="Brown M.J."/>
            <person name="Bonnin D."/>
            <person name="Bruford E.A."/>
            <person name="Buhay C."/>
            <person name="Burch P."/>
            <person name="Burford D."/>
            <person name="Burgess J."/>
            <person name="Burrill W."/>
            <person name="Burton J."/>
            <person name="Bye J.M."/>
            <person name="Carder C."/>
            <person name="Carrel L."/>
            <person name="Chako J."/>
            <person name="Chapman J.C."/>
            <person name="Chavez D."/>
            <person name="Chen E."/>
            <person name="Chen G."/>
            <person name="Chen Y."/>
            <person name="Chen Z."/>
            <person name="Chinault C."/>
            <person name="Ciccodicola A."/>
            <person name="Clark S.Y."/>
            <person name="Clarke G."/>
            <person name="Clee C.M."/>
            <person name="Clegg S."/>
            <person name="Clerc-Blankenburg K."/>
            <person name="Clifford K."/>
            <person name="Cobley V."/>
            <person name="Cole C.G."/>
            <person name="Conquer J.S."/>
            <person name="Corby N."/>
            <person name="Connor R.E."/>
            <person name="David R."/>
            <person name="Davies J."/>
            <person name="Davis C."/>
            <person name="Davis J."/>
            <person name="Delgado O."/>
            <person name="Deshazo D."/>
            <person name="Dhami P."/>
            <person name="Ding Y."/>
            <person name="Dinh H."/>
            <person name="Dodsworth S."/>
            <person name="Draper H."/>
            <person name="Dugan-Rocha S."/>
            <person name="Dunham A."/>
            <person name="Dunn M."/>
            <person name="Durbin K.J."/>
            <person name="Dutta I."/>
            <person name="Eades T."/>
            <person name="Ellwood M."/>
            <person name="Emery-Cohen A."/>
            <person name="Errington H."/>
            <person name="Evans K.L."/>
            <person name="Faulkner L."/>
            <person name="Francis F."/>
            <person name="Frankland J."/>
            <person name="Fraser A.E."/>
            <person name="Galgoczy P."/>
            <person name="Gilbert J."/>
            <person name="Gill R."/>
            <person name="Gloeckner G."/>
            <person name="Gregory S.G."/>
            <person name="Gribble S."/>
            <person name="Griffiths C."/>
            <person name="Grocock R."/>
            <person name="Gu Y."/>
            <person name="Gwilliam R."/>
            <person name="Hamilton C."/>
            <person name="Hart E.A."/>
            <person name="Hawes A."/>
            <person name="Heath P.D."/>
            <person name="Heitmann K."/>
            <person name="Hennig S."/>
            <person name="Hernandez J."/>
            <person name="Hinzmann B."/>
            <person name="Ho S."/>
            <person name="Hoffs M."/>
            <person name="Howden P.J."/>
            <person name="Huckle E.J."/>
            <person name="Hume J."/>
            <person name="Hunt P.J."/>
            <person name="Hunt A.R."/>
            <person name="Isherwood J."/>
            <person name="Jacob L."/>
            <person name="Johnson D."/>
            <person name="Jones S."/>
            <person name="de Jong P.J."/>
            <person name="Joseph S.S."/>
            <person name="Keenan S."/>
            <person name="Kelly S."/>
            <person name="Kershaw J.K."/>
            <person name="Khan Z."/>
            <person name="Kioschis P."/>
            <person name="Klages S."/>
            <person name="Knights A.J."/>
            <person name="Kosiura A."/>
            <person name="Kovar-Smith C."/>
            <person name="Laird G.K."/>
            <person name="Langford C."/>
            <person name="Lawlor S."/>
            <person name="Leversha M."/>
            <person name="Lewis L."/>
            <person name="Liu W."/>
            <person name="Lloyd C."/>
            <person name="Lloyd D.M."/>
            <person name="Loulseged H."/>
            <person name="Loveland J.E."/>
            <person name="Lovell J.D."/>
            <person name="Lozado R."/>
            <person name="Lu J."/>
            <person name="Lyne R."/>
            <person name="Ma J."/>
            <person name="Maheshwari M."/>
            <person name="Matthews L.H."/>
            <person name="McDowall J."/>
            <person name="McLaren S."/>
            <person name="McMurray A."/>
            <person name="Meidl P."/>
            <person name="Meitinger T."/>
            <person name="Milne S."/>
            <person name="Miner G."/>
            <person name="Mistry S.L."/>
            <person name="Morgan M."/>
            <person name="Morris S."/>
            <person name="Mueller I."/>
            <person name="Mullikin J.C."/>
            <person name="Nguyen N."/>
            <person name="Nordsiek G."/>
            <person name="Nyakatura G."/>
            <person name="O'dell C.N."/>
            <person name="Okwuonu G."/>
            <person name="Palmer S."/>
            <person name="Pandian R."/>
            <person name="Parker D."/>
            <person name="Parrish J."/>
            <person name="Pasternak S."/>
            <person name="Patel D."/>
            <person name="Pearce A.V."/>
            <person name="Pearson D.M."/>
            <person name="Pelan S.E."/>
            <person name="Perez L."/>
            <person name="Porter K.M."/>
            <person name="Ramsey Y."/>
            <person name="Reichwald K."/>
            <person name="Rhodes S."/>
            <person name="Ridler K.A."/>
            <person name="Schlessinger D."/>
            <person name="Schueler M.G."/>
            <person name="Sehra H.K."/>
            <person name="Shaw-Smith C."/>
            <person name="Shen H."/>
            <person name="Sheridan E.M."/>
            <person name="Shownkeen R."/>
            <person name="Skuce C.D."/>
            <person name="Smith M.L."/>
            <person name="Sotheran E.C."/>
            <person name="Steingruber H.E."/>
            <person name="Steward C.A."/>
            <person name="Storey R."/>
            <person name="Swann R.M."/>
            <person name="Swarbreck D."/>
            <person name="Tabor P.E."/>
            <person name="Taudien S."/>
            <person name="Taylor T."/>
            <person name="Teague B."/>
            <person name="Thomas K."/>
            <person name="Thorpe A."/>
            <person name="Timms K."/>
            <person name="Tracey A."/>
            <person name="Trevanion S."/>
            <person name="Tromans A.C."/>
            <person name="d'Urso M."/>
            <person name="Verduzco D."/>
            <person name="Villasana D."/>
            <person name="Waldron L."/>
            <person name="Wall M."/>
            <person name="Wang Q."/>
            <person name="Warren J."/>
            <person name="Warry G.L."/>
            <person name="Wei X."/>
            <person name="West A."/>
            <person name="Whitehead S.L."/>
            <person name="Whiteley M.N."/>
            <person name="Wilkinson J.E."/>
            <person name="Willey D.L."/>
            <person name="Williams G."/>
            <person name="Williams L."/>
            <person name="Williamson A."/>
            <person name="Williamson H."/>
            <person name="Wilming L."/>
            <person name="Woodmansey R.L."/>
            <person name="Wray P.W."/>
            <person name="Yen J."/>
            <person name="Zhang J."/>
            <person name="Zhou J."/>
            <person name="Zoghbi H."/>
            <person name="Zorilla S."/>
            <person name="Buck D."/>
            <person name="Reinhardt R."/>
            <person name="Poustka A."/>
            <person name="Rosenthal A."/>
            <person name="Lehrach H."/>
            <person name="Meindl A."/>
            <person name="Minx P.J."/>
            <person name="Hillier L.W."/>
            <person name="Willard H.F."/>
            <person name="Wilson R.K."/>
            <person name="Waterston R.H."/>
            <person name="Rice C.M."/>
            <person name="Vaudin M."/>
            <person name="Coulson A."/>
            <person name="Nelson D.L."/>
            <person name="Weinstock G."/>
            <person name="Sulston J.E."/>
            <person name="Durbin R.M."/>
            <person name="Hubbard T."/>
            <person name="Gibbs R.A."/>
            <person name="Beck S."/>
            <person name="Rogers J."/>
            <person name="Bentley D.R."/>
        </authorList>
    </citation>
    <scope>NUCLEOTIDE SEQUENCE [LARGE SCALE GENOMIC DNA]</scope>
</reference>
<reference key="6">
    <citation type="journal article" date="2004" name="Genome Res.">
        <title>The status, quality, and expansion of the NIH full-length cDNA project: the Mammalian Gene Collection (MGC).</title>
        <authorList>
            <consortium name="The MGC Project Team"/>
        </authorList>
    </citation>
    <scope>NUCLEOTIDE SEQUENCE [LARGE SCALE MRNA]</scope>
    <source>
        <tissue>Uterus</tissue>
    </source>
</reference>
<organism>
    <name type="scientific">Homo sapiens</name>
    <name type="common">Human</name>
    <dbReference type="NCBI Taxonomy" id="9606"/>
    <lineage>
        <taxon>Eukaryota</taxon>
        <taxon>Metazoa</taxon>
        <taxon>Chordata</taxon>
        <taxon>Craniata</taxon>
        <taxon>Vertebrata</taxon>
        <taxon>Euteleostomi</taxon>
        <taxon>Mammalia</taxon>
        <taxon>Eutheria</taxon>
        <taxon>Euarchontoglires</taxon>
        <taxon>Primates</taxon>
        <taxon>Haplorrhini</taxon>
        <taxon>Catarrhini</taxon>
        <taxon>Hominidae</taxon>
        <taxon>Homo</taxon>
    </lineage>
</organism>
<gene>
    <name type="primary">ARMCX1</name>
    <name type="synonym">ALEX1</name>
    <name type="ORF">AD032</name>
</gene>
<proteinExistence type="evidence at protein level"/>